<sequence>MQSSYCPSPYRYTRRVTREVMVGNVGVGGSNPIRIQSMLTSDTRDTDACVKEALELAEAGCEIIRLTAQTKAYAANLENIARELRAAGCHVPLVADIHFKPDAAMEAAKWVEKIRINPGNFVDKKKFEVREYSDAEYREELDRLKEEFTPLVLFCREHGRAMRIGSNHGSLSDRILNRFGDTPEGMVESAIEFAQIARDLDYHSLVFSMKASNVKVMVAAYRLLVERMNALGPDWNYPIHLGVTEAGGGEDGRIKSAVGIGSLLTDGIGDTLRVSLTEDAVREVPVAYRLSNPFQPSERSDDPVSFPEPELSYDPLKFSKRQGGLAMYYGVRLGWEQPVRVAVPDAGFYALQTEREAMGDMMPELSLGQLDAIEVDPRCDADLEPLKELAEPSIVTVKNGLAMEPVYAFRLLAARIEDRHLILLKDTLVPGSVSGEDVPLTAARNIGSLLCDGIGDAVLIQGESDPRLASFLGFNILQATGTRLTRADYVSCPSCGRTLYNIQEATARIRKATEHLKGVKIAVMGCIVNGPGEMADADFGYVGGAPNKINLYVKHTPVKFNIPQEEAVERLVDLIKEYGRWVDPK</sequence>
<dbReference type="EC" id="1.17.7.3" evidence="1"/>
<dbReference type="EMBL" id="CP001071">
    <property type="protein sequence ID" value="ACD05212.1"/>
    <property type="molecule type" value="Genomic_DNA"/>
</dbReference>
<dbReference type="RefSeq" id="WP_012420427.1">
    <property type="nucleotide sequence ID" value="NC_010655.1"/>
</dbReference>
<dbReference type="SMR" id="B2UKT9"/>
<dbReference type="STRING" id="349741.Amuc_1388"/>
<dbReference type="PaxDb" id="349741-Amuc_1388"/>
<dbReference type="KEGG" id="amu:Amuc_1388"/>
<dbReference type="eggNOG" id="COG0821">
    <property type="taxonomic scope" value="Bacteria"/>
</dbReference>
<dbReference type="HOGENOM" id="CLU_012689_0_0_0"/>
<dbReference type="OrthoDB" id="9803214at2"/>
<dbReference type="BioCyc" id="AMUC349741:G1GBX-1474-MONOMER"/>
<dbReference type="UniPathway" id="UPA00056">
    <property type="reaction ID" value="UER00096"/>
</dbReference>
<dbReference type="Proteomes" id="UP000001031">
    <property type="component" value="Chromosome"/>
</dbReference>
<dbReference type="GO" id="GO:0051539">
    <property type="term" value="F:4 iron, 4 sulfur cluster binding"/>
    <property type="evidence" value="ECO:0007669"/>
    <property type="project" value="UniProtKB-UniRule"/>
</dbReference>
<dbReference type="GO" id="GO:0046429">
    <property type="term" value="F:4-hydroxy-3-methylbut-2-en-1-yl diphosphate synthase activity (ferredoxin)"/>
    <property type="evidence" value="ECO:0007669"/>
    <property type="project" value="UniProtKB-UniRule"/>
</dbReference>
<dbReference type="GO" id="GO:0141197">
    <property type="term" value="F:4-hydroxy-3-methylbut-2-enyl-diphosphate synthase activity (flavodoxin)"/>
    <property type="evidence" value="ECO:0007669"/>
    <property type="project" value="UniProtKB-EC"/>
</dbReference>
<dbReference type="GO" id="GO:0005506">
    <property type="term" value="F:iron ion binding"/>
    <property type="evidence" value="ECO:0007669"/>
    <property type="project" value="InterPro"/>
</dbReference>
<dbReference type="GO" id="GO:0019288">
    <property type="term" value="P:isopentenyl diphosphate biosynthetic process, methylerythritol 4-phosphate pathway"/>
    <property type="evidence" value="ECO:0007669"/>
    <property type="project" value="UniProtKB-UniRule"/>
</dbReference>
<dbReference type="GO" id="GO:0016114">
    <property type="term" value="P:terpenoid biosynthetic process"/>
    <property type="evidence" value="ECO:0007669"/>
    <property type="project" value="InterPro"/>
</dbReference>
<dbReference type="FunFam" id="3.20.20.20:FF:000005">
    <property type="entry name" value="4-hydroxy-3-methylbut-2-en-1-yl diphosphate synthase (flavodoxin)"/>
    <property type="match status" value="1"/>
</dbReference>
<dbReference type="FunFam" id="3.30.413.10:FF:000006">
    <property type="entry name" value="4-hydroxy-3-methylbut-2-en-1-yl diphosphate synthase (flavodoxin)"/>
    <property type="match status" value="1"/>
</dbReference>
<dbReference type="Gene3D" id="3.20.20.20">
    <property type="entry name" value="Dihydropteroate synthase-like"/>
    <property type="match status" value="1"/>
</dbReference>
<dbReference type="Gene3D" id="3.30.413.10">
    <property type="entry name" value="Sulfite Reductase Hemoprotein, domain 1"/>
    <property type="match status" value="1"/>
</dbReference>
<dbReference type="HAMAP" id="MF_00159">
    <property type="entry name" value="IspG"/>
    <property type="match status" value="1"/>
</dbReference>
<dbReference type="InterPro" id="IPR011005">
    <property type="entry name" value="Dihydropteroate_synth-like_sf"/>
</dbReference>
<dbReference type="InterPro" id="IPR017178">
    <property type="entry name" value="IspG_atypical"/>
</dbReference>
<dbReference type="InterPro" id="IPR004588">
    <property type="entry name" value="IspG_bac-typ"/>
</dbReference>
<dbReference type="InterPro" id="IPR045854">
    <property type="entry name" value="NO2/SO3_Rdtase_4Fe4S_sf"/>
</dbReference>
<dbReference type="NCBIfam" id="TIGR00612">
    <property type="entry name" value="ispG_gcpE"/>
    <property type="match status" value="1"/>
</dbReference>
<dbReference type="PANTHER" id="PTHR30454">
    <property type="entry name" value="4-HYDROXY-3-METHYLBUT-2-EN-1-YL DIPHOSPHATE SYNTHASE"/>
    <property type="match status" value="1"/>
</dbReference>
<dbReference type="PANTHER" id="PTHR30454:SF0">
    <property type="entry name" value="4-HYDROXY-3-METHYLBUT-2-EN-1-YL DIPHOSPHATE SYNTHASE (FERREDOXIN), CHLOROPLASTIC"/>
    <property type="match status" value="1"/>
</dbReference>
<dbReference type="Pfam" id="PF04551">
    <property type="entry name" value="GcpE"/>
    <property type="match status" value="2"/>
</dbReference>
<dbReference type="PIRSF" id="PIRSF037336">
    <property type="entry name" value="IspG_like"/>
    <property type="match status" value="1"/>
</dbReference>
<dbReference type="SUPFAM" id="SSF51717">
    <property type="entry name" value="Dihydropteroate synthetase-like"/>
    <property type="match status" value="1"/>
</dbReference>
<dbReference type="SUPFAM" id="SSF56014">
    <property type="entry name" value="Nitrite and sulphite reductase 4Fe-4S domain-like"/>
    <property type="match status" value="1"/>
</dbReference>
<feature type="chain" id="PRO_1000097145" description="4-hydroxy-3-methylbut-2-en-1-yl diphosphate synthase (flavodoxin)">
    <location>
        <begin position="1"/>
        <end position="585"/>
    </location>
</feature>
<feature type="binding site" evidence="1">
    <location>
        <position position="492"/>
    </location>
    <ligand>
        <name>[4Fe-4S] cluster</name>
        <dbReference type="ChEBI" id="CHEBI:49883"/>
    </ligand>
</feature>
<feature type="binding site" evidence="1">
    <location>
        <position position="495"/>
    </location>
    <ligand>
        <name>[4Fe-4S] cluster</name>
        <dbReference type="ChEBI" id="CHEBI:49883"/>
    </ligand>
</feature>
<feature type="binding site" evidence="1">
    <location>
        <position position="526"/>
    </location>
    <ligand>
        <name>[4Fe-4S] cluster</name>
        <dbReference type="ChEBI" id="CHEBI:49883"/>
    </ligand>
</feature>
<feature type="binding site" evidence="1">
    <location>
        <position position="533"/>
    </location>
    <ligand>
        <name>[4Fe-4S] cluster</name>
        <dbReference type="ChEBI" id="CHEBI:49883"/>
    </ligand>
</feature>
<accession>B2UKT9</accession>
<name>ISPG_AKKM8</name>
<comment type="function">
    <text evidence="1">Converts 2C-methyl-D-erythritol 2,4-cyclodiphosphate (ME-2,4cPP) into 1-hydroxy-2-methyl-2-(E)-butenyl 4-diphosphate.</text>
</comment>
<comment type="catalytic activity">
    <reaction evidence="1">
        <text>(2E)-4-hydroxy-3-methylbut-2-enyl diphosphate + oxidized [flavodoxin] + H2O + 2 H(+) = 2-C-methyl-D-erythritol 2,4-cyclic diphosphate + reduced [flavodoxin]</text>
        <dbReference type="Rhea" id="RHEA:43604"/>
        <dbReference type="Rhea" id="RHEA-COMP:10622"/>
        <dbReference type="Rhea" id="RHEA-COMP:10623"/>
        <dbReference type="ChEBI" id="CHEBI:15377"/>
        <dbReference type="ChEBI" id="CHEBI:15378"/>
        <dbReference type="ChEBI" id="CHEBI:57618"/>
        <dbReference type="ChEBI" id="CHEBI:58210"/>
        <dbReference type="ChEBI" id="CHEBI:58483"/>
        <dbReference type="ChEBI" id="CHEBI:128753"/>
        <dbReference type="EC" id="1.17.7.3"/>
    </reaction>
</comment>
<comment type="cofactor">
    <cofactor evidence="1">
        <name>[4Fe-4S] cluster</name>
        <dbReference type="ChEBI" id="CHEBI:49883"/>
    </cofactor>
    <text evidence="1">Binds 1 [4Fe-4S] cluster.</text>
</comment>
<comment type="pathway">
    <text evidence="1">Isoprenoid biosynthesis; isopentenyl diphosphate biosynthesis via DXP pathway; isopentenyl diphosphate from 1-deoxy-D-xylulose 5-phosphate: step 5/6.</text>
</comment>
<comment type="similarity">
    <text evidence="1">Belongs to the IspG family.</text>
</comment>
<keyword id="KW-0004">4Fe-4S</keyword>
<keyword id="KW-0408">Iron</keyword>
<keyword id="KW-0411">Iron-sulfur</keyword>
<keyword id="KW-0414">Isoprene biosynthesis</keyword>
<keyword id="KW-0479">Metal-binding</keyword>
<keyword id="KW-0560">Oxidoreductase</keyword>
<keyword id="KW-1185">Reference proteome</keyword>
<evidence type="ECO:0000255" key="1">
    <source>
        <dbReference type="HAMAP-Rule" id="MF_00159"/>
    </source>
</evidence>
<reference key="1">
    <citation type="journal article" date="2011" name="PLoS ONE">
        <title>The genome of Akkermansia muciniphila, a dedicated intestinal mucin degrader, and its use in exploring intestinal metagenomes.</title>
        <authorList>
            <person name="van Passel M.W."/>
            <person name="Kant R."/>
            <person name="Zoetendal E.G."/>
            <person name="Plugge C.M."/>
            <person name="Derrien M."/>
            <person name="Malfatti S.A."/>
            <person name="Chain P.S."/>
            <person name="Woyke T."/>
            <person name="Palva A."/>
            <person name="de Vos W.M."/>
            <person name="Smidt H."/>
        </authorList>
    </citation>
    <scope>NUCLEOTIDE SEQUENCE [LARGE SCALE GENOMIC DNA]</scope>
    <source>
        <strain>ATCC BAA-835 / DSM 22959 / JCM 33894 / BCRC 81048 / CCUG 64013 / CIP 107961 / Muc</strain>
    </source>
</reference>
<gene>
    <name evidence="1" type="primary">ispG</name>
    <name type="ordered locus">Amuc_1388</name>
</gene>
<proteinExistence type="inferred from homology"/>
<organism>
    <name type="scientific">Akkermansia muciniphila (strain ATCC BAA-835 / DSM 22959 / JCM 33894 / BCRC 81048 / CCUG 64013 / CIP 107961 / Muc)</name>
    <dbReference type="NCBI Taxonomy" id="349741"/>
    <lineage>
        <taxon>Bacteria</taxon>
        <taxon>Pseudomonadati</taxon>
        <taxon>Verrucomicrobiota</taxon>
        <taxon>Verrucomicrobiia</taxon>
        <taxon>Verrucomicrobiales</taxon>
        <taxon>Akkermansiaceae</taxon>
        <taxon>Akkermansia</taxon>
    </lineage>
</organism>
<protein>
    <recommendedName>
        <fullName evidence="1">4-hydroxy-3-methylbut-2-en-1-yl diphosphate synthase (flavodoxin)</fullName>
        <ecNumber evidence="1">1.17.7.3</ecNumber>
    </recommendedName>
    <alternativeName>
        <fullName evidence="1">1-hydroxy-2-methyl-2-(E)-butenyl 4-diphosphate synthase</fullName>
    </alternativeName>
</protein>